<feature type="chain" id="PRO_0000427661" description="4-hydroxy-3-methylbut-2-enyl diphosphate reductase 1">
    <location>
        <begin position="1"/>
        <end position="329"/>
    </location>
</feature>
<feature type="active site" description="Proton donor" evidence="1">
    <location>
        <position position="147"/>
    </location>
</feature>
<feature type="binding site" evidence="1">
    <location>
        <position position="29"/>
    </location>
    <ligand>
        <name>[4Fe-4S] cluster</name>
        <dbReference type="ChEBI" id="CHEBI:49883"/>
    </ligand>
</feature>
<feature type="binding site" evidence="1">
    <location>
        <position position="58"/>
    </location>
    <ligand>
        <name>(2E)-4-hydroxy-3-methylbut-2-enyl diphosphate</name>
        <dbReference type="ChEBI" id="CHEBI:128753"/>
    </ligand>
</feature>
<feature type="binding site" evidence="1">
    <location>
        <position position="58"/>
    </location>
    <ligand>
        <name>dimethylallyl diphosphate</name>
        <dbReference type="ChEBI" id="CHEBI:57623"/>
    </ligand>
</feature>
<feature type="binding site" evidence="1">
    <location>
        <position position="58"/>
    </location>
    <ligand>
        <name>isopentenyl diphosphate</name>
        <dbReference type="ChEBI" id="CHEBI:128769"/>
    </ligand>
</feature>
<feature type="binding site" evidence="1">
    <location>
        <position position="95"/>
    </location>
    <ligand>
        <name>(2E)-4-hydroxy-3-methylbut-2-enyl diphosphate</name>
        <dbReference type="ChEBI" id="CHEBI:128753"/>
    </ligand>
</feature>
<feature type="binding site" evidence="1">
    <location>
        <position position="95"/>
    </location>
    <ligand>
        <name>dimethylallyl diphosphate</name>
        <dbReference type="ChEBI" id="CHEBI:57623"/>
    </ligand>
</feature>
<feature type="binding site" evidence="1">
    <location>
        <position position="95"/>
    </location>
    <ligand>
        <name>isopentenyl diphosphate</name>
        <dbReference type="ChEBI" id="CHEBI:128769"/>
    </ligand>
</feature>
<feature type="binding site" evidence="1">
    <location>
        <position position="117"/>
    </location>
    <ligand>
        <name>[4Fe-4S] cluster</name>
        <dbReference type="ChEBI" id="CHEBI:49883"/>
    </ligand>
</feature>
<feature type="binding site" evidence="1">
    <location>
        <position position="145"/>
    </location>
    <ligand>
        <name>(2E)-4-hydroxy-3-methylbut-2-enyl diphosphate</name>
        <dbReference type="ChEBI" id="CHEBI:128753"/>
    </ligand>
</feature>
<feature type="binding site" evidence="1">
    <location>
        <position position="145"/>
    </location>
    <ligand>
        <name>dimethylallyl diphosphate</name>
        <dbReference type="ChEBI" id="CHEBI:57623"/>
    </ligand>
</feature>
<feature type="binding site" evidence="1">
    <location>
        <position position="145"/>
    </location>
    <ligand>
        <name>isopentenyl diphosphate</name>
        <dbReference type="ChEBI" id="CHEBI:128769"/>
    </ligand>
</feature>
<feature type="binding site" evidence="1">
    <location>
        <position position="185"/>
    </location>
    <ligand>
        <name>(2E)-4-hydroxy-3-methylbut-2-enyl diphosphate</name>
        <dbReference type="ChEBI" id="CHEBI:128753"/>
    </ligand>
</feature>
<feature type="binding site" evidence="1">
    <location>
        <position position="215"/>
    </location>
    <ligand>
        <name>[4Fe-4S] cluster</name>
        <dbReference type="ChEBI" id="CHEBI:49883"/>
    </ligand>
</feature>
<feature type="binding site" evidence="1">
    <location>
        <position position="243"/>
    </location>
    <ligand>
        <name>(2E)-4-hydroxy-3-methylbut-2-enyl diphosphate</name>
        <dbReference type="ChEBI" id="CHEBI:128753"/>
    </ligand>
</feature>
<feature type="binding site" evidence="1">
    <location>
        <position position="243"/>
    </location>
    <ligand>
        <name>dimethylallyl diphosphate</name>
        <dbReference type="ChEBI" id="CHEBI:57623"/>
    </ligand>
</feature>
<feature type="binding site" evidence="1">
    <location>
        <position position="243"/>
    </location>
    <ligand>
        <name>isopentenyl diphosphate</name>
        <dbReference type="ChEBI" id="CHEBI:128769"/>
    </ligand>
</feature>
<feature type="binding site" evidence="1">
    <location>
        <position position="244"/>
    </location>
    <ligand>
        <name>(2E)-4-hydroxy-3-methylbut-2-enyl diphosphate</name>
        <dbReference type="ChEBI" id="CHEBI:128753"/>
    </ligand>
</feature>
<feature type="binding site" evidence="1">
    <location>
        <position position="244"/>
    </location>
    <ligand>
        <name>dimethylallyl diphosphate</name>
        <dbReference type="ChEBI" id="CHEBI:57623"/>
    </ligand>
</feature>
<feature type="binding site" evidence="1">
    <location>
        <position position="244"/>
    </location>
    <ligand>
        <name>isopentenyl diphosphate</name>
        <dbReference type="ChEBI" id="CHEBI:128769"/>
    </ligand>
</feature>
<feature type="binding site" evidence="1">
    <location>
        <position position="245"/>
    </location>
    <ligand>
        <name>(2E)-4-hydroxy-3-methylbut-2-enyl diphosphate</name>
        <dbReference type="ChEBI" id="CHEBI:128753"/>
    </ligand>
</feature>
<feature type="binding site" evidence="1">
    <location>
        <position position="245"/>
    </location>
    <ligand>
        <name>dimethylallyl diphosphate</name>
        <dbReference type="ChEBI" id="CHEBI:57623"/>
    </ligand>
</feature>
<feature type="binding site" evidence="1">
    <location>
        <position position="245"/>
    </location>
    <ligand>
        <name>isopentenyl diphosphate</name>
        <dbReference type="ChEBI" id="CHEBI:128769"/>
    </ligand>
</feature>
<feature type="binding site" evidence="1">
    <location>
        <position position="287"/>
    </location>
    <ligand>
        <name>(2E)-4-hydroxy-3-methylbut-2-enyl diphosphate</name>
        <dbReference type="ChEBI" id="CHEBI:128753"/>
    </ligand>
</feature>
<feature type="binding site" evidence="1">
    <location>
        <position position="287"/>
    </location>
    <ligand>
        <name>dimethylallyl diphosphate</name>
        <dbReference type="ChEBI" id="CHEBI:57623"/>
    </ligand>
</feature>
<feature type="binding site" evidence="1">
    <location>
        <position position="287"/>
    </location>
    <ligand>
        <name>isopentenyl diphosphate</name>
        <dbReference type="ChEBI" id="CHEBI:128769"/>
    </ligand>
</feature>
<keyword id="KW-0004">4Fe-4S</keyword>
<keyword id="KW-0408">Iron</keyword>
<keyword id="KW-0411">Iron-sulfur</keyword>
<keyword id="KW-0414">Isoprene biosynthesis</keyword>
<keyword id="KW-0479">Metal-binding</keyword>
<keyword id="KW-0560">Oxidoreductase</keyword>
<keyword id="KW-1185">Reference proteome</keyword>
<protein>
    <recommendedName>
        <fullName evidence="1">4-hydroxy-3-methylbut-2-enyl diphosphate reductase 1</fullName>
        <shortName evidence="1">HMBPP reductase 1</shortName>
        <ecNumber evidence="1">1.17.7.4</ecNumber>
    </recommendedName>
</protein>
<sequence>MAEVFVGPVAQGYASGEVTVLLASPRSFCAGVERAIETVKRVLDVAEGPVYVRKQIVHNTVVVAELRDRGAVFVEDLDEIPDPPPPGAVVVFSAHGVSPAVRAGADERGLQVVDATCPLVAKVHAEAARFAARGDTVVFIGHAGHEETEGTLGVAPRSTLLVQTPADVAALNLPEGTQLSYLTQTTLALDETADVIDALRARFPTLGQPPSEDICYATTNRQRALQSMVGECDVVLVIGSCNSSNSRRLVELAQRSGTPAYLIDGPDDIEPEWLSSVSTIGVTAGASAPPRLVGQVIDALRGYASITVVERSIATETVRFGLPKQVRAQ</sequence>
<reference key="1">
    <citation type="journal article" date="2002" name="J. Bacteriol.">
        <title>Whole-genome comparison of Mycobacterium tuberculosis clinical and laboratory strains.</title>
        <authorList>
            <person name="Fleischmann R.D."/>
            <person name="Alland D."/>
            <person name="Eisen J.A."/>
            <person name="Carpenter L."/>
            <person name="White O."/>
            <person name="Peterson J.D."/>
            <person name="DeBoy R.T."/>
            <person name="Dodson R.J."/>
            <person name="Gwinn M.L."/>
            <person name="Haft D.H."/>
            <person name="Hickey E.K."/>
            <person name="Kolonay J.F."/>
            <person name="Nelson W.C."/>
            <person name="Umayam L.A."/>
            <person name="Ermolaeva M.D."/>
            <person name="Salzberg S.L."/>
            <person name="Delcher A."/>
            <person name="Utterback T.R."/>
            <person name="Weidman J.F."/>
            <person name="Khouri H.M."/>
            <person name="Gill J."/>
            <person name="Mikula A."/>
            <person name="Bishai W."/>
            <person name="Jacobs W.R. Jr."/>
            <person name="Venter J.C."/>
            <person name="Fraser C.M."/>
        </authorList>
    </citation>
    <scope>NUCLEOTIDE SEQUENCE [LARGE SCALE GENOMIC DNA]</scope>
    <source>
        <strain>CDC 1551 / Oshkosh</strain>
    </source>
</reference>
<comment type="function">
    <text evidence="1">Catalyzes the conversion of 1-hydroxy-2-methyl-2-(E)-butenyl 4-diphosphate (HMBPP) into a mixture of isopentenyl diphosphate (IPP) and dimethylallyl diphosphate (DMAPP). Acts in the terminal step of the DOXP/MEP pathway for isoprenoid precursor biosynthesis.</text>
</comment>
<comment type="catalytic activity">
    <reaction evidence="1">
        <text>isopentenyl diphosphate + 2 oxidized [2Fe-2S]-[ferredoxin] + H2O = (2E)-4-hydroxy-3-methylbut-2-enyl diphosphate + 2 reduced [2Fe-2S]-[ferredoxin] + 2 H(+)</text>
        <dbReference type="Rhea" id="RHEA:24488"/>
        <dbReference type="Rhea" id="RHEA-COMP:10000"/>
        <dbReference type="Rhea" id="RHEA-COMP:10001"/>
        <dbReference type="ChEBI" id="CHEBI:15377"/>
        <dbReference type="ChEBI" id="CHEBI:15378"/>
        <dbReference type="ChEBI" id="CHEBI:33737"/>
        <dbReference type="ChEBI" id="CHEBI:33738"/>
        <dbReference type="ChEBI" id="CHEBI:128753"/>
        <dbReference type="ChEBI" id="CHEBI:128769"/>
        <dbReference type="EC" id="1.17.7.4"/>
    </reaction>
</comment>
<comment type="catalytic activity">
    <reaction evidence="1">
        <text>dimethylallyl diphosphate + 2 oxidized [2Fe-2S]-[ferredoxin] + H2O = (2E)-4-hydroxy-3-methylbut-2-enyl diphosphate + 2 reduced [2Fe-2S]-[ferredoxin] + 2 H(+)</text>
        <dbReference type="Rhea" id="RHEA:24825"/>
        <dbReference type="Rhea" id="RHEA-COMP:10000"/>
        <dbReference type="Rhea" id="RHEA-COMP:10001"/>
        <dbReference type="ChEBI" id="CHEBI:15377"/>
        <dbReference type="ChEBI" id="CHEBI:15378"/>
        <dbReference type="ChEBI" id="CHEBI:33737"/>
        <dbReference type="ChEBI" id="CHEBI:33738"/>
        <dbReference type="ChEBI" id="CHEBI:57623"/>
        <dbReference type="ChEBI" id="CHEBI:128753"/>
        <dbReference type="EC" id="1.17.7.4"/>
    </reaction>
</comment>
<comment type="cofactor">
    <cofactor evidence="1">
        <name>[4Fe-4S] cluster</name>
        <dbReference type="ChEBI" id="CHEBI:49883"/>
    </cofactor>
    <text evidence="1">Binds 1 [4Fe-4S] cluster per subunit.</text>
</comment>
<comment type="pathway">
    <text evidence="1">Isoprenoid biosynthesis; dimethylallyl diphosphate biosynthesis; dimethylallyl diphosphate from (2E)-4-hydroxy-3-methylbutenyl diphosphate: step 1/1.</text>
</comment>
<comment type="pathway">
    <text evidence="1">Isoprenoid biosynthesis; isopentenyl diphosphate biosynthesis via DXP pathway; isopentenyl diphosphate from 1-deoxy-D-xylulose 5-phosphate: step 6/6.</text>
</comment>
<comment type="similarity">
    <text evidence="1">Belongs to the IspH family.</text>
</comment>
<organism>
    <name type="scientific">Mycobacterium tuberculosis (strain CDC 1551 / Oshkosh)</name>
    <dbReference type="NCBI Taxonomy" id="83331"/>
    <lineage>
        <taxon>Bacteria</taxon>
        <taxon>Bacillati</taxon>
        <taxon>Actinomycetota</taxon>
        <taxon>Actinomycetes</taxon>
        <taxon>Mycobacteriales</taxon>
        <taxon>Mycobacteriaceae</taxon>
        <taxon>Mycobacterium</taxon>
        <taxon>Mycobacterium tuberculosis complex</taxon>
    </lineage>
</organism>
<name>ISPH1_MYCTO</name>
<accession>P9WKF8</accession>
<accession>L0TCD3</accession>
<accession>O50409</accession>
<accession>P0A5I2</accession>
<dbReference type="EC" id="1.17.7.4" evidence="1"/>
<dbReference type="EMBL" id="AE000516">
    <property type="protein sequence ID" value="AAK47825.1"/>
    <property type="molecule type" value="Genomic_DNA"/>
</dbReference>
<dbReference type="PIR" id="E70973">
    <property type="entry name" value="E70973"/>
</dbReference>
<dbReference type="SMR" id="P9WKF8"/>
<dbReference type="KEGG" id="mtc:MT3490"/>
<dbReference type="PATRIC" id="fig|83331.31.peg.3746"/>
<dbReference type="HOGENOM" id="CLU_027486_1_1_11"/>
<dbReference type="UniPathway" id="UPA00056">
    <property type="reaction ID" value="UER00097"/>
</dbReference>
<dbReference type="UniPathway" id="UPA00059">
    <property type="reaction ID" value="UER00105"/>
</dbReference>
<dbReference type="Proteomes" id="UP000001020">
    <property type="component" value="Chromosome"/>
</dbReference>
<dbReference type="GO" id="GO:0051539">
    <property type="term" value="F:4 iron, 4 sulfur cluster binding"/>
    <property type="evidence" value="ECO:0007669"/>
    <property type="project" value="UniProtKB-UniRule"/>
</dbReference>
<dbReference type="GO" id="GO:0051745">
    <property type="term" value="F:4-hydroxy-3-methylbut-2-enyl diphosphate reductase activity"/>
    <property type="evidence" value="ECO:0007669"/>
    <property type="project" value="UniProtKB-UniRule"/>
</dbReference>
<dbReference type="GO" id="GO:0046872">
    <property type="term" value="F:metal ion binding"/>
    <property type="evidence" value="ECO:0007669"/>
    <property type="project" value="UniProtKB-KW"/>
</dbReference>
<dbReference type="GO" id="GO:0050992">
    <property type="term" value="P:dimethylallyl diphosphate biosynthetic process"/>
    <property type="evidence" value="ECO:0007669"/>
    <property type="project" value="UniProtKB-UniRule"/>
</dbReference>
<dbReference type="GO" id="GO:0019288">
    <property type="term" value="P:isopentenyl diphosphate biosynthetic process, methylerythritol 4-phosphate pathway"/>
    <property type="evidence" value="ECO:0007669"/>
    <property type="project" value="UniProtKB-UniRule"/>
</dbReference>
<dbReference type="GO" id="GO:0016114">
    <property type="term" value="P:terpenoid biosynthetic process"/>
    <property type="evidence" value="ECO:0007669"/>
    <property type="project" value="UniProtKB-UniRule"/>
</dbReference>
<dbReference type="CDD" id="cd13944">
    <property type="entry name" value="lytB_ispH"/>
    <property type="match status" value="1"/>
</dbReference>
<dbReference type="Gene3D" id="3.40.50.11270">
    <property type="match status" value="1"/>
</dbReference>
<dbReference type="Gene3D" id="3.40.1010.20">
    <property type="entry name" value="4-hydroxy-3-methylbut-2-enyl diphosphate reductase, catalytic domain"/>
    <property type="match status" value="2"/>
</dbReference>
<dbReference type="HAMAP" id="MF_00191">
    <property type="entry name" value="IspH"/>
    <property type="match status" value="1"/>
</dbReference>
<dbReference type="InterPro" id="IPR003451">
    <property type="entry name" value="LytB/IspH"/>
</dbReference>
<dbReference type="NCBIfam" id="TIGR00216">
    <property type="entry name" value="ispH_lytB"/>
    <property type="match status" value="1"/>
</dbReference>
<dbReference type="NCBIfam" id="NF002190">
    <property type="entry name" value="PRK01045.1-4"/>
    <property type="match status" value="1"/>
</dbReference>
<dbReference type="PANTHER" id="PTHR30426">
    <property type="entry name" value="4-HYDROXY-3-METHYLBUT-2-ENYL DIPHOSPHATE REDUCTASE"/>
    <property type="match status" value="1"/>
</dbReference>
<dbReference type="PANTHER" id="PTHR30426:SF0">
    <property type="entry name" value="4-HYDROXY-3-METHYLBUT-2-ENYL DIPHOSPHATE REDUCTASE"/>
    <property type="match status" value="1"/>
</dbReference>
<dbReference type="Pfam" id="PF02401">
    <property type="entry name" value="LYTB"/>
    <property type="match status" value="1"/>
</dbReference>
<gene>
    <name evidence="2" type="primary">ispH1</name>
    <name evidence="3" type="synonym">lytB-2</name>
    <name type="ordered locus">MT3490</name>
</gene>
<evidence type="ECO:0000255" key="1">
    <source>
        <dbReference type="HAMAP-Rule" id="MF_00191"/>
    </source>
</evidence>
<evidence type="ECO:0000305" key="2"/>
<evidence type="ECO:0000312" key="3">
    <source>
        <dbReference type="EMBL" id="AAK47825.1"/>
    </source>
</evidence>
<proteinExistence type="inferred from homology"/>